<reference key="1">
    <citation type="journal article" date="1997" name="Nature">
        <title>The nucleotide sequence of Saccharomyces cerevisiae chromosome XVI.</title>
        <authorList>
            <person name="Bussey H."/>
            <person name="Storms R.K."/>
            <person name="Ahmed A."/>
            <person name="Albermann K."/>
            <person name="Allen E."/>
            <person name="Ansorge W."/>
            <person name="Araujo R."/>
            <person name="Aparicio A."/>
            <person name="Barrell B.G."/>
            <person name="Badcock K."/>
            <person name="Benes V."/>
            <person name="Botstein D."/>
            <person name="Bowman S."/>
            <person name="Brueckner M."/>
            <person name="Carpenter J."/>
            <person name="Cherry J.M."/>
            <person name="Chung E."/>
            <person name="Churcher C.M."/>
            <person name="Coster F."/>
            <person name="Davis K."/>
            <person name="Davis R.W."/>
            <person name="Dietrich F.S."/>
            <person name="Delius H."/>
            <person name="DiPaolo T."/>
            <person name="Dubois E."/>
            <person name="Duesterhoeft A."/>
            <person name="Duncan M."/>
            <person name="Floeth M."/>
            <person name="Fortin N."/>
            <person name="Friesen J.D."/>
            <person name="Fritz C."/>
            <person name="Goffeau A."/>
            <person name="Hall J."/>
            <person name="Hebling U."/>
            <person name="Heumann K."/>
            <person name="Hilbert H."/>
            <person name="Hillier L.W."/>
            <person name="Hunicke-Smith S."/>
            <person name="Hyman R.W."/>
            <person name="Johnston M."/>
            <person name="Kalman S."/>
            <person name="Kleine K."/>
            <person name="Komp C."/>
            <person name="Kurdi O."/>
            <person name="Lashkari D."/>
            <person name="Lew H."/>
            <person name="Lin A."/>
            <person name="Lin D."/>
            <person name="Louis E.J."/>
            <person name="Marathe R."/>
            <person name="Messenguy F."/>
            <person name="Mewes H.-W."/>
            <person name="Mirtipati S."/>
            <person name="Moestl D."/>
            <person name="Mueller-Auer S."/>
            <person name="Namath A."/>
            <person name="Nentwich U."/>
            <person name="Oefner P."/>
            <person name="Pearson D."/>
            <person name="Petel F.X."/>
            <person name="Pohl T.M."/>
            <person name="Purnelle B."/>
            <person name="Rajandream M.A."/>
            <person name="Rechmann S."/>
            <person name="Rieger M."/>
            <person name="Riles L."/>
            <person name="Roberts D."/>
            <person name="Schaefer M."/>
            <person name="Scharfe M."/>
            <person name="Scherens B."/>
            <person name="Schramm S."/>
            <person name="Schroeder M."/>
            <person name="Sdicu A.-M."/>
            <person name="Tettelin H."/>
            <person name="Urrestarazu L.A."/>
            <person name="Ushinsky S."/>
            <person name="Vierendeels F."/>
            <person name="Vissers S."/>
            <person name="Voss H."/>
            <person name="Walsh S.V."/>
            <person name="Wambutt R."/>
            <person name="Wang Y."/>
            <person name="Wedler E."/>
            <person name="Wedler H."/>
            <person name="Winnett E."/>
            <person name="Zhong W.-W."/>
            <person name="Zollner A."/>
            <person name="Vo D.H."/>
            <person name="Hani J."/>
        </authorList>
    </citation>
    <scope>NUCLEOTIDE SEQUENCE [LARGE SCALE GENOMIC DNA]</scope>
    <source>
        <strain>ATCC 204508 / S288c</strain>
    </source>
</reference>
<reference key="2">
    <citation type="journal article" date="2014" name="G3 (Bethesda)">
        <title>The reference genome sequence of Saccharomyces cerevisiae: Then and now.</title>
        <authorList>
            <person name="Engel S.R."/>
            <person name="Dietrich F.S."/>
            <person name="Fisk D.G."/>
            <person name="Binkley G."/>
            <person name="Balakrishnan R."/>
            <person name="Costanzo M.C."/>
            <person name="Dwight S.S."/>
            <person name="Hitz B.C."/>
            <person name="Karra K."/>
            <person name="Nash R.S."/>
            <person name="Weng S."/>
            <person name="Wong E.D."/>
            <person name="Lloyd P."/>
            <person name="Skrzypek M.S."/>
            <person name="Miyasato S.R."/>
            <person name="Simison M."/>
            <person name="Cherry J.M."/>
        </authorList>
    </citation>
    <scope>GENOME REANNOTATION</scope>
    <source>
        <strain>ATCC 204508 / S288c</strain>
    </source>
</reference>
<reference key="3">
    <citation type="journal article" date="2003" name="Nature">
        <title>Global analysis of protein localization in budding yeast.</title>
        <authorList>
            <person name="Huh W.-K."/>
            <person name="Falvo J.V."/>
            <person name="Gerke L.C."/>
            <person name="Carroll A.S."/>
            <person name="Howson R.W."/>
            <person name="Weissman J.S."/>
            <person name="O'Shea E.K."/>
        </authorList>
    </citation>
    <scope>SUBCELLULAR LOCATION [LARGE SCALE ANALYSIS]</scope>
</reference>
<reference key="4">
    <citation type="journal article" date="2003" name="Nature">
        <title>Global analysis of protein expression in yeast.</title>
        <authorList>
            <person name="Ghaemmaghami S."/>
            <person name="Huh W.-K."/>
            <person name="Bower K."/>
            <person name="Howson R.W."/>
            <person name="Belle A."/>
            <person name="Dephoure N."/>
            <person name="O'Shea E.K."/>
            <person name="Weissman J.S."/>
        </authorList>
    </citation>
    <scope>LEVEL OF PROTEIN EXPRESSION [LARGE SCALE ANALYSIS]</scope>
</reference>
<name>YP107_YEAST</name>
<organism>
    <name type="scientific">Saccharomyces cerevisiae (strain ATCC 204508 / S288c)</name>
    <name type="common">Baker's yeast</name>
    <dbReference type="NCBI Taxonomy" id="559292"/>
    <lineage>
        <taxon>Eukaryota</taxon>
        <taxon>Fungi</taxon>
        <taxon>Dikarya</taxon>
        <taxon>Ascomycota</taxon>
        <taxon>Saccharomycotina</taxon>
        <taxon>Saccharomycetes</taxon>
        <taxon>Saccharomycetales</taxon>
        <taxon>Saccharomycetaceae</taxon>
        <taxon>Saccharomyces</taxon>
    </lineage>
</organism>
<proteinExistence type="evidence at protein level"/>
<comment type="subcellular location">
    <subcellularLocation>
        <location evidence="2">Mitochondrion</location>
    </subcellularLocation>
</comment>
<comment type="miscellaneous">
    <text evidence="3">Present with 2100 molecules/cell in log phase SD medium.</text>
</comment>
<comment type="similarity">
    <text evidence="4">Belongs to the UPF0651 family.</text>
</comment>
<accession>Q02873</accession>
<accession>D6W3R0</accession>
<protein>
    <recommendedName>
        <fullName>UPF0651 protein YPL107W, mitochondrial</fullName>
    </recommendedName>
</protein>
<dbReference type="EMBL" id="U43281">
    <property type="protein sequence ID" value="AAB68193.1"/>
    <property type="molecule type" value="Genomic_DNA"/>
</dbReference>
<dbReference type="EMBL" id="BK006949">
    <property type="protein sequence ID" value="DAA11326.1"/>
    <property type="molecule type" value="Genomic_DNA"/>
</dbReference>
<dbReference type="PIR" id="S61960">
    <property type="entry name" value="S61960"/>
</dbReference>
<dbReference type="BioGRID" id="36074">
    <property type="interactions" value="81"/>
</dbReference>
<dbReference type="DIP" id="DIP-4652N"/>
<dbReference type="FunCoup" id="Q02873">
    <property type="interactions" value="75"/>
</dbReference>
<dbReference type="IntAct" id="Q02873">
    <property type="interactions" value="2"/>
</dbReference>
<dbReference type="STRING" id="4932.YPL107W"/>
<dbReference type="PaxDb" id="4932-YPL107W"/>
<dbReference type="PeptideAtlas" id="Q02873"/>
<dbReference type="EnsemblFungi" id="YPL107W_mRNA">
    <property type="protein sequence ID" value="YPL107W"/>
    <property type="gene ID" value="YPL107W"/>
</dbReference>
<dbReference type="KEGG" id="sce:YPL107W"/>
<dbReference type="AGR" id="SGD:S000006028"/>
<dbReference type="SGD" id="S000006028">
    <property type="gene designation" value="YPL107W"/>
</dbReference>
<dbReference type="VEuPathDB" id="FungiDB:YPL107W"/>
<dbReference type="eggNOG" id="KOG4690">
    <property type="taxonomic scope" value="Eukaryota"/>
</dbReference>
<dbReference type="HOGENOM" id="CLU_062297_1_0_1"/>
<dbReference type="InParanoid" id="Q02873"/>
<dbReference type="OMA" id="CVWEIYN"/>
<dbReference type="OrthoDB" id="10064411at2759"/>
<dbReference type="BioCyc" id="YEAST:G3O-34009-MONOMER"/>
<dbReference type="BioGRID-ORCS" id="855997">
    <property type="hits" value="0 hits in 10 CRISPR screens"/>
</dbReference>
<dbReference type="PRO" id="PR:Q02873"/>
<dbReference type="Proteomes" id="UP000002311">
    <property type="component" value="Chromosome XVI"/>
</dbReference>
<dbReference type="RNAct" id="Q02873">
    <property type="molecule type" value="protein"/>
</dbReference>
<dbReference type="GO" id="GO:0005739">
    <property type="term" value="C:mitochondrion"/>
    <property type="evidence" value="ECO:0007005"/>
    <property type="project" value="SGD"/>
</dbReference>
<dbReference type="InterPro" id="IPR019180">
    <property type="entry name" value="Oxidoreductase-like_N"/>
</dbReference>
<dbReference type="InterPro" id="IPR039251">
    <property type="entry name" value="OXLD1"/>
</dbReference>
<dbReference type="PANTHER" id="PTHR21193">
    <property type="entry name" value="OXIDOREDUCTASE-LIKE DOMAIN-CONTAINING PROTEIN 1"/>
    <property type="match status" value="1"/>
</dbReference>
<dbReference type="PANTHER" id="PTHR21193:SF3">
    <property type="entry name" value="OXIDOREDUCTASE-LIKE DOMAIN-CONTAINING PROTEIN 1"/>
    <property type="match status" value="1"/>
</dbReference>
<dbReference type="Pfam" id="PF09791">
    <property type="entry name" value="Oxidored-like"/>
    <property type="match status" value="1"/>
</dbReference>
<gene>
    <name type="ordered locus">YPL107W</name>
</gene>
<keyword id="KW-0496">Mitochondrion</keyword>
<keyword id="KW-1185">Reference proteome</keyword>
<keyword id="KW-0809">Transit peptide</keyword>
<sequence>MIRNQGWSLLYRIYPVRRFTRYSRVDMTFEGNTQDISTSVEERMTTVFGGRLKGEPPRSTSRVLSGGTKKIAGVQVPAKPQEPDNCCMSGCVNCVWEIYSEDLRDWKHRRKEAAEKIAGTKEKWPKDWNPPLGLLHMENVPVELREKKLETDSKKAEQPHDLSAIRSLFPKRKGPLPKSVLAAKRKNIALRHNYEQKDGGDQSVSESDADEGWEDIPVYVKAFAEFESKKRLQKIRRQEEIKKRTALV</sequence>
<evidence type="ECO:0000255" key="1"/>
<evidence type="ECO:0000269" key="2">
    <source>
    </source>
</evidence>
<evidence type="ECO:0000269" key="3">
    <source>
    </source>
</evidence>
<evidence type="ECO:0000305" key="4"/>
<feature type="transit peptide" description="Mitochondrion" evidence="1">
    <location>
        <begin position="1"/>
        <end position="26"/>
    </location>
</feature>
<feature type="chain" id="PRO_0000238646" description="UPF0651 protein YPL107W, mitochondrial">
    <location>
        <begin position="27"/>
        <end position="248"/>
    </location>
</feature>
<feature type="domain" description="Oxidoreductase-like">
    <location>
        <begin position="69"/>
        <end position="116"/>
    </location>
</feature>